<sequence length="114" mass="12615">MYYKFSGFTQKLAGAWASEAYSPQGLKPVVSTEAPPIIFATPTKLTSDSTVYDYAGKNKVPELQKFFQKADGVPVYLKRGLPDQMLYRTTMALTVGGTIYCLIALYMASQPKNK</sequence>
<evidence type="ECO:0000250" key="1">
    <source>
        <dbReference type="UniProtKB" id="Q99KD6"/>
    </source>
</evidence>
<evidence type="ECO:0000255" key="2"/>
<evidence type="ECO:0000269" key="3">
    <source>
    </source>
</evidence>
<evidence type="ECO:0000269" key="4">
    <source>
    </source>
</evidence>
<evidence type="ECO:0000269" key="5">
    <source>
    </source>
</evidence>
<evidence type="ECO:0000269" key="6">
    <source>
    </source>
</evidence>
<evidence type="ECO:0000269" key="7">
    <source>
    </source>
</evidence>
<evidence type="ECO:0000269" key="8">
    <source>
    </source>
</evidence>
<evidence type="ECO:0000269" key="9">
    <source>
    </source>
</evidence>
<evidence type="ECO:0000303" key="10">
    <source>
    </source>
</evidence>
<evidence type="ECO:0000303" key="11">
    <source>
    </source>
</evidence>
<evidence type="ECO:0000303" key="12">
    <source>
    </source>
</evidence>
<evidence type="ECO:0000303" key="13">
    <source>
    </source>
</evidence>
<evidence type="ECO:0000303" key="14">
    <source>
    </source>
</evidence>
<evidence type="ECO:0000305" key="15"/>
<evidence type="ECO:0000305" key="16">
    <source>
    </source>
</evidence>
<evidence type="ECO:0000312" key="17">
    <source>
        <dbReference type="HGNC" id="HGNC:2289"/>
    </source>
</evidence>
<evidence type="ECO:0007744" key="18">
    <source>
    </source>
</evidence>
<comment type="function">
    <text evidence="1 3 4 6 7">Assembly factor that mediates the formation of some mitochondrial respiratory supercomplexes (respirasomes), thereby promoting oxidative phosphorylation and energy metabolism (PubMed:27545886, PubMed:30428348, PubMed:33727070, PubMed:36198313). Acts as a molecular adapter that associates with both mitochondrial respiratory complexes III (CIII) and IV (CIV), promoting their association (PubMed:27545886, PubMed:36198313). Mediates the formation of various mitochondrial respiratory supercomplexes, such as MCIII(2)IV(2), composed of two CIII and two CIV, and the CS-respirasome (MCI(1)III(2)IV(2)), composed of one CI, two CIII and two CIV (PubMed:27545886, PubMed:30428348). Not involved in the formation of the canonical respirasome (MCI(1)III(2)IV(1)), composed of one CI, two CIII and one CIV (By similarity). The formation of different respirasomes is important for cell adaptation to oxygen conditions and prevent metabolic exhaustion: supercomplexes mediated by COX7A2L/SCAF1 are required to maintain oxidative phosphorylation upon low oxygen conditions and promote metabolic rewiring toward glycolysis (PubMed:36198313).</text>
</comment>
<comment type="subunit">
    <text evidence="3">Interacts with the mitochondrial respiratory complexes III (CIII) and IV (CIV), promoting their association.</text>
</comment>
<comment type="subcellular location">
    <subcellularLocation>
        <location evidence="16">Mitochondrion inner membrane</location>
        <topology evidence="1">Single-pass membrane protein</topology>
    </subcellularLocation>
</comment>
<comment type="induction">
    <text evidence="5 9">By estrogen (PubMed:9418891). Expression is induced by ATF4 downstream of the EIF2AK3/PERK-mediated unfolded protein response, thereby increasing formation of respiratory chain supercomplexes (PubMed:31023583).</text>
</comment>
<comment type="polymorphism">
    <text evidence="8">Genetic variations affect COX7A2L expression in human population (PubMed:36253618). The rs10183278 variant leads to increased COX7A2L expression in the muscle and is associated with lower body fat and improved cardiorespiratory fitness (PubMed:36253618). Myotubes harboring this insertion display more mitochondrial respiratory supercomplexes and increased respiration (PubMed:36253618). The genetic variant rs10183278 is characterized by an insertion in the 3' untranslated region of COX7A2L transcripts, which specifically promotes mRNA stability and expression (PubMed:36253618).</text>
</comment>
<comment type="similarity">
    <text evidence="15">Belongs to the cytochrome c oxidase VIIa family.</text>
</comment>
<reference key="1">
    <citation type="journal article" date="1998" name="Mol. Cell. Biol.">
        <title>Isolation of estrogen-responsive genes with a CpG island library.</title>
        <authorList>
            <person name="Watanabe T."/>
            <person name="Inoue S."/>
            <person name="Hiroi H."/>
            <person name="Orimo A."/>
            <person name="Kawashima H."/>
            <person name="Muramatsu M."/>
        </authorList>
    </citation>
    <scope>NUCLEOTIDE SEQUENCE [MRNA]</scope>
    <scope>INDUCTION</scope>
    <source>
        <tissue>Placenta</tissue>
    </source>
</reference>
<reference key="2">
    <citation type="journal article" date="1999" name="Mol. Biol. Evol.">
        <title>Molecular evolution of the COX7A gene family in primates.</title>
        <authorList>
            <person name="Schmidt T.R."/>
            <person name="Goodman M."/>
            <person name="Grossman L.I."/>
        </authorList>
    </citation>
    <scope>NUCLEOTIDE SEQUENCE [MRNA]</scope>
</reference>
<reference key="3">
    <citation type="journal article" date="2001" name="Am. J. Hum. Genet.">
        <title>A genomewide linkage-disequilibrium scan localizes the Saguenay-Lac-Saint-Jean cytochrome oxidase deficiency to 2p16.</title>
        <authorList>
            <person name="Lee N."/>
            <person name="Daly M.J."/>
            <person name="Delmonte T."/>
            <person name="Lander E.S."/>
            <person name="Xu F."/>
            <person name="Hudson T.J."/>
            <person name="Mitchell G.A."/>
            <person name="Morin C.C."/>
            <person name="Robinson B.H."/>
            <person name="Rioux J.D."/>
        </authorList>
    </citation>
    <scope>NUCLEOTIDE SEQUENCE [GENOMIC DNA]</scope>
</reference>
<reference key="4">
    <citation type="submission" date="2004-10" db="EMBL/GenBank/DDBJ databases">
        <title>Cloning of human full-length CDSs in BD Creator(TM) system donor vector.</title>
        <authorList>
            <person name="Kalnine N."/>
            <person name="Chen X."/>
            <person name="Rolfs A."/>
            <person name="Halleck A."/>
            <person name="Hines L."/>
            <person name="Eisenstein S."/>
            <person name="Koundinya M."/>
            <person name="Raphael J."/>
            <person name="Moreira D."/>
            <person name="Kelley T."/>
            <person name="LaBaer J."/>
            <person name="Lin Y."/>
            <person name="Phelan M."/>
            <person name="Farmer A."/>
        </authorList>
    </citation>
    <scope>NUCLEOTIDE SEQUENCE [LARGE SCALE MRNA]</scope>
</reference>
<reference key="5">
    <citation type="journal article" date="2004" name="Genome Res.">
        <title>The status, quality, and expansion of the NIH full-length cDNA project: the Mammalian Gene Collection (MGC).</title>
        <authorList>
            <consortium name="The MGC Project Team"/>
        </authorList>
    </citation>
    <scope>NUCLEOTIDE SEQUENCE [LARGE SCALE MRNA]</scope>
    <source>
        <tissue>Lung</tissue>
        <tissue>Prostate</tissue>
    </source>
</reference>
<reference key="6">
    <citation type="journal article" date="2009" name="Science">
        <title>Lysine acetylation targets protein complexes and co-regulates major cellular functions.</title>
        <authorList>
            <person name="Choudhary C."/>
            <person name="Kumar C."/>
            <person name="Gnad F."/>
            <person name="Nielsen M.L."/>
            <person name="Rehman M."/>
            <person name="Walther T.C."/>
            <person name="Olsen J.V."/>
            <person name="Mann M."/>
        </authorList>
    </citation>
    <scope>ACETYLATION [LARGE SCALE ANALYSIS] AT LYS-69</scope>
    <scope>IDENTIFICATION BY MASS SPECTROMETRY [LARGE SCALE ANALYSIS]</scope>
</reference>
<reference key="7">
    <citation type="journal article" date="2011" name="BMC Syst. Biol.">
        <title>Initial characterization of the human central proteome.</title>
        <authorList>
            <person name="Burkard T.R."/>
            <person name="Planyavsky M."/>
            <person name="Kaupe I."/>
            <person name="Breitwieser F.P."/>
            <person name="Buerckstuemmer T."/>
            <person name="Bennett K.L."/>
            <person name="Superti-Furga G."/>
            <person name="Colinge J."/>
        </authorList>
    </citation>
    <scope>IDENTIFICATION BY MASS SPECTROMETRY [LARGE SCALE ANALYSIS]</scope>
</reference>
<reference key="8">
    <citation type="journal article" date="2016" name="Cell Rep.">
        <title>COX7A2L is a mitochondrial complex III binding protein that stabilizes the III2+IV supercomplex without affecting respirasome formation.</title>
        <authorList>
            <person name="Perez-Perez R."/>
            <person name="Lobo-Jarne T."/>
            <person name="Milenkovic D."/>
            <person name="Mourier A."/>
            <person name="Bratic A."/>
            <person name="Garcia-Bartolome A."/>
            <person name="Fernandez-Vizarra E."/>
            <person name="Cadenas S."/>
            <person name="Delmiro A."/>
            <person name="Garcia-Consuegra I."/>
            <person name="Arenas J."/>
            <person name="Martin M.A."/>
            <person name="Larsson N.G."/>
            <person name="Ugalde C."/>
        </authorList>
    </citation>
    <scope>FUNCTION</scope>
    <scope>SUBCELLULAR LOCATION</scope>
    <scope>INTERACTION WITH MITOCHONDRIAL RESPIRATORY COMPLEXES</scope>
</reference>
<reference key="9">
    <citation type="journal article" date="2018" name="Cell Rep.">
        <title>Human COX7A2L regulates complex III biogenesis and promotes supercomplex organization remodeling without affecting mitochondrial bioenergetics.</title>
        <authorList>
            <person name="Lobo-Jarne T."/>
            <person name="Nyvltova E."/>
            <person name="Perez-Perez R."/>
            <person name="Timon-Gomez A."/>
            <person name="Molinie T."/>
            <person name="Choi A."/>
            <person name="Mourier A."/>
            <person name="Fontanesi F."/>
            <person name="Ugalde C."/>
            <person name="Barrientos A."/>
        </authorList>
    </citation>
    <scope>FUNCTION</scope>
    <scope>MUTAGENESIS OF 74-PRO-VAL-75</scope>
</reference>
<reference key="10">
    <citation type="journal article" date="2019" name="Mol. Cell">
        <title>ER and nutrient stress promote assembly of respiratory chain supercomplexes through the PERK-eIF2alpha axis.</title>
        <authorList>
            <person name="Balsa E."/>
            <person name="Soustek M.S."/>
            <person name="Thomas A."/>
            <person name="Cogliati S."/>
            <person name="Garcia-Poyatos C."/>
            <person name="Martin-Garcia E."/>
            <person name="Jedrychowski M."/>
            <person name="Gygi S.P."/>
            <person name="Enriquez J.A."/>
            <person name="Puigserver P."/>
        </authorList>
    </citation>
    <scope>INDUCTION</scope>
</reference>
<reference key="11">
    <citation type="journal article" date="2021" name="Biochim. Biophys. Acta">
        <title>SILAC-based complexome profiling dissects the structural organization of the human respiratory supercomplexes in SCAFIKO cells.</title>
        <authorList>
            <person name="Fernandez-Vizarra E."/>
            <person name="Lopez-Calcerrada S."/>
            <person name="Formosa L.E."/>
            <person name="Perez-Perez R."/>
            <person name="Ding S."/>
            <person name="Fearnley I.M."/>
            <person name="Arenas J."/>
            <person name="Martin M.A."/>
            <person name="Zeviani M."/>
            <person name="Ryan M.T."/>
            <person name="Ugalde C."/>
        </authorList>
    </citation>
    <scope>FUNCTION</scope>
</reference>
<reference key="12">
    <citation type="journal article" date="2022" name="Cell Metab.">
        <title>Two independent respiratory chains adapt OXPHOS performance to glycolytic switch.</title>
        <authorList>
            <person name="Fernandez-Vizarra E."/>
            <person name="Lopez-Calcerrada S."/>
            <person name="Sierra-Magro A."/>
            <person name="Perez-Perez R."/>
            <person name="Formosa L.E."/>
            <person name="Hock D.H."/>
            <person name="Illescas M."/>
            <person name="Penas A."/>
            <person name="Brischigliaro M."/>
            <person name="Ding S."/>
            <person name="Fearnley I.M."/>
            <person name="Tzoulis C."/>
            <person name="Pitceathly R.D.S."/>
            <person name="Arenas J."/>
            <person name="Martin M.A."/>
            <person name="Stroud D.A."/>
            <person name="Zeviani M."/>
            <person name="Ryan M.T."/>
            <person name="Ugalde C."/>
        </authorList>
    </citation>
    <scope>FUNCTION</scope>
</reference>
<reference key="13">
    <citation type="journal article" date="2022" name="Nat. Metab.">
        <title>COX7A2L genetic variants determine cardiorespiratory fitness in mice and human.</title>
        <authorList>
            <person name="Benegiamo G."/>
            <person name="Bou Sleiman M."/>
            <person name="Wohlwend M."/>
            <person name="Rodriguez-Lopez S."/>
            <person name="Goeminne L.J.E."/>
            <person name="Laurila P.P."/>
            <person name="Klevjer M."/>
            <person name="Salonen M.K."/>
            <person name="Lahti J."/>
            <person name="Jha P."/>
            <person name="Cogliati S."/>
            <person name="Enriquez J.A."/>
            <person name="Brumpton B.M."/>
            <person name="Bye A."/>
            <person name="Eriksson J.G."/>
            <person name="Auwerx J."/>
        </authorList>
    </citation>
    <scope>POLYMORPHISM</scope>
</reference>
<accession>O14548</accession>
<accession>Q9P118</accession>
<dbReference type="EMBL" id="AB007618">
    <property type="protein sequence ID" value="BAA22571.1"/>
    <property type="molecule type" value="mRNA"/>
</dbReference>
<dbReference type="EMBL" id="AF127788">
    <property type="protein sequence ID" value="AAF72746.1"/>
    <property type="molecule type" value="mRNA"/>
</dbReference>
<dbReference type="EMBL" id="AY007643">
    <property type="protein sequence ID" value="AAG32129.1"/>
    <property type="molecule type" value="Genomic_DNA"/>
</dbReference>
<dbReference type="EMBL" id="BT007371">
    <property type="protein sequence ID" value="AAP36035.1"/>
    <property type="molecule type" value="mRNA"/>
</dbReference>
<dbReference type="EMBL" id="BC005251">
    <property type="protein sequence ID" value="AAH05251.1"/>
    <property type="molecule type" value="mRNA"/>
</dbReference>
<dbReference type="EMBL" id="BC007095">
    <property type="protein sequence ID" value="AAH07095.1"/>
    <property type="molecule type" value="mRNA"/>
</dbReference>
<dbReference type="CCDS" id="CCDS1808.1"/>
<dbReference type="RefSeq" id="NP_001305965.1">
    <property type="nucleotide sequence ID" value="NM_001319036.1"/>
</dbReference>
<dbReference type="RefSeq" id="NP_001305969.1">
    <property type="nucleotide sequence ID" value="NM_001319040.1"/>
</dbReference>
<dbReference type="RefSeq" id="NP_004709.2">
    <property type="nucleotide sequence ID" value="NM_004718.3"/>
</dbReference>
<dbReference type="RefSeq" id="XP_047302247.1">
    <property type="nucleotide sequence ID" value="XM_047446291.1"/>
</dbReference>
<dbReference type="RefSeq" id="XP_054200479.1">
    <property type="nucleotide sequence ID" value="XM_054344504.1"/>
</dbReference>
<dbReference type="SMR" id="O14548"/>
<dbReference type="BioGRID" id="114608">
    <property type="interactions" value="87"/>
</dbReference>
<dbReference type="FunCoup" id="O14548">
    <property type="interactions" value="1975"/>
</dbReference>
<dbReference type="IntAct" id="O14548">
    <property type="interactions" value="30"/>
</dbReference>
<dbReference type="MINT" id="O14548"/>
<dbReference type="STRING" id="9606.ENSP00000367938"/>
<dbReference type="iPTMnet" id="O14548"/>
<dbReference type="PhosphoSitePlus" id="O14548"/>
<dbReference type="SwissPalm" id="O14548"/>
<dbReference type="BioMuta" id="COX7A2L"/>
<dbReference type="jPOST" id="O14548"/>
<dbReference type="MassIVE" id="O14548"/>
<dbReference type="PaxDb" id="9606-ENSP00000367938"/>
<dbReference type="PeptideAtlas" id="O14548"/>
<dbReference type="ProteomicsDB" id="48081"/>
<dbReference type="Pumba" id="O14548"/>
<dbReference type="TopDownProteomics" id="O14548"/>
<dbReference type="Antibodypedia" id="29742">
    <property type="antibodies" value="155 antibodies from 28 providers"/>
</dbReference>
<dbReference type="DNASU" id="9167"/>
<dbReference type="Ensembl" id="ENST00000234301.3">
    <property type="protein sequence ID" value="ENSP00000234301.2"/>
    <property type="gene ID" value="ENSG00000115944.15"/>
</dbReference>
<dbReference type="Ensembl" id="ENST00000378669.5">
    <property type="protein sequence ID" value="ENSP00000367938.1"/>
    <property type="gene ID" value="ENSG00000115944.15"/>
</dbReference>
<dbReference type="GeneID" id="9167"/>
<dbReference type="KEGG" id="hsa:9167"/>
<dbReference type="MANE-Select" id="ENST00000234301.3">
    <property type="protein sequence ID" value="ENSP00000234301.2"/>
    <property type="RefSeq nucleotide sequence ID" value="NM_004718.4"/>
    <property type="RefSeq protein sequence ID" value="NP_004709.2"/>
</dbReference>
<dbReference type="AGR" id="HGNC:2289"/>
<dbReference type="CTD" id="9167"/>
<dbReference type="DisGeNET" id="9167"/>
<dbReference type="GeneCards" id="COX7A2L"/>
<dbReference type="HGNC" id="HGNC:2289">
    <property type="gene designation" value="COX7A2L"/>
</dbReference>
<dbReference type="HPA" id="ENSG00000115944">
    <property type="expression patterns" value="Low tissue specificity"/>
</dbReference>
<dbReference type="MIM" id="605771">
    <property type="type" value="gene"/>
</dbReference>
<dbReference type="neXtProt" id="NX_O14548"/>
<dbReference type="OpenTargets" id="ENSG00000115944"/>
<dbReference type="PharmGKB" id="PA26807"/>
<dbReference type="VEuPathDB" id="HostDB:ENSG00000115944"/>
<dbReference type="eggNOG" id="ENOG502S14M">
    <property type="taxonomic scope" value="Eukaryota"/>
</dbReference>
<dbReference type="GeneTree" id="ENSGT00940000154815"/>
<dbReference type="HOGENOM" id="CLU_149431_0_0_1"/>
<dbReference type="InParanoid" id="O14548"/>
<dbReference type="OMA" id="KFNGITQ"/>
<dbReference type="OrthoDB" id="5966508at2759"/>
<dbReference type="PAN-GO" id="O14548">
    <property type="GO annotations" value="3 GO annotations based on evolutionary models"/>
</dbReference>
<dbReference type="PhylomeDB" id="O14548"/>
<dbReference type="TreeFam" id="TF105067"/>
<dbReference type="PathwayCommons" id="O14548"/>
<dbReference type="Reactome" id="R-HSA-5628897">
    <property type="pathway name" value="TP53 Regulates Metabolic Genes"/>
</dbReference>
<dbReference type="Reactome" id="R-HSA-611105">
    <property type="pathway name" value="Respiratory electron transport"/>
</dbReference>
<dbReference type="Reactome" id="R-HSA-9707564">
    <property type="pathway name" value="Cytoprotection by HMOX1"/>
</dbReference>
<dbReference type="Reactome" id="R-HSA-9864848">
    <property type="pathway name" value="Complex IV assembly"/>
</dbReference>
<dbReference type="SignaLink" id="O14548"/>
<dbReference type="BioGRID-ORCS" id="9167">
    <property type="hits" value="19 hits in 1157 CRISPR screens"/>
</dbReference>
<dbReference type="CD-CODE" id="FB4E32DD">
    <property type="entry name" value="Presynaptic clusters and postsynaptic densities"/>
</dbReference>
<dbReference type="ChiTaRS" id="COX7A2L">
    <property type="organism name" value="human"/>
</dbReference>
<dbReference type="GeneWiki" id="COX7A2L"/>
<dbReference type="GenomeRNAi" id="9167"/>
<dbReference type="Pharos" id="O14548">
    <property type="development level" value="Tbio"/>
</dbReference>
<dbReference type="PRO" id="PR:O14548"/>
<dbReference type="Proteomes" id="UP000005640">
    <property type="component" value="Chromosome 2"/>
</dbReference>
<dbReference type="RNAct" id="O14548">
    <property type="molecule type" value="protein"/>
</dbReference>
<dbReference type="Bgee" id="ENSG00000115944">
    <property type="expression patterns" value="Expressed in endothelial cell and 213 other cell types or tissues"/>
</dbReference>
<dbReference type="ExpressionAtlas" id="O14548">
    <property type="expression patterns" value="baseline and differential"/>
</dbReference>
<dbReference type="GO" id="GO:0005743">
    <property type="term" value="C:mitochondrial inner membrane"/>
    <property type="evidence" value="ECO:0000314"/>
    <property type="project" value="UniProt"/>
</dbReference>
<dbReference type="GO" id="GO:0005739">
    <property type="term" value="C:mitochondrion"/>
    <property type="evidence" value="ECO:0000314"/>
    <property type="project" value="UniProtKB"/>
</dbReference>
<dbReference type="GO" id="GO:0005730">
    <property type="term" value="C:nucleolus"/>
    <property type="evidence" value="ECO:0000314"/>
    <property type="project" value="HPA"/>
</dbReference>
<dbReference type="GO" id="GO:0098803">
    <property type="term" value="C:respiratory chain complex"/>
    <property type="evidence" value="ECO:0000318"/>
    <property type="project" value="GO_Central"/>
</dbReference>
<dbReference type="GO" id="GO:0045277">
    <property type="term" value="C:respiratory chain complex IV"/>
    <property type="evidence" value="ECO:0007669"/>
    <property type="project" value="InterPro"/>
</dbReference>
<dbReference type="GO" id="GO:0004129">
    <property type="term" value="F:cytochrome-c oxidase activity"/>
    <property type="evidence" value="ECO:0000304"/>
    <property type="project" value="ProtInc"/>
</dbReference>
<dbReference type="GO" id="GO:0030674">
    <property type="term" value="F:protein-macromolecule adaptor activity"/>
    <property type="evidence" value="ECO:0000314"/>
    <property type="project" value="UniProtKB"/>
</dbReference>
<dbReference type="GO" id="GO:0006123">
    <property type="term" value="P:mitochondrial electron transport, cytochrome c to oxygen"/>
    <property type="evidence" value="ECO:0007669"/>
    <property type="project" value="InterPro"/>
</dbReference>
<dbReference type="GO" id="GO:0097250">
    <property type="term" value="P:mitochondrial respirasome assembly"/>
    <property type="evidence" value="ECO:0000314"/>
    <property type="project" value="UniProtKB"/>
</dbReference>
<dbReference type="CDD" id="cd00928">
    <property type="entry name" value="Cyt_c_Oxidase_VIIa"/>
    <property type="match status" value="1"/>
</dbReference>
<dbReference type="FunFam" id="4.10.91.10:FF:000001">
    <property type="entry name" value="Cytochrome c oxidase subunit 7A1, mitochondrial"/>
    <property type="match status" value="1"/>
</dbReference>
<dbReference type="Gene3D" id="4.10.91.10">
    <property type="entry name" value="Cytochrome c oxidase, subunit VIIa"/>
    <property type="match status" value="1"/>
</dbReference>
<dbReference type="InterPro" id="IPR039297">
    <property type="entry name" value="COX7a"/>
</dbReference>
<dbReference type="InterPro" id="IPR017267">
    <property type="entry name" value="Cyt_c_oxidase_su7a-rel_mt"/>
</dbReference>
<dbReference type="InterPro" id="IPR036539">
    <property type="entry name" value="Cyt_c_oxidase_su7a_sf"/>
</dbReference>
<dbReference type="InterPro" id="IPR003177">
    <property type="entry name" value="Cytc_oxidase_su7a_met"/>
</dbReference>
<dbReference type="PANTHER" id="PTHR10510">
    <property type="entry name" value="CYTOCHROME C OXIDASE POLYPEPTIDE 7A"/>
    <property type="match status" value="1"/>
</dbReference>
<dbReference type="PANTHER" id="PTHR10510:SF2">
    <property type="entry name" value="CYTOCHROME C OXIDASE SUBUNIT 7A-RELATED PROTEIN, MITOCHONDRIAL"/>
    <property type="match status" value="1"/>
</dbReference>
<dbReference type="Pfam" id="PF02238">
    <property type="entry name" value="COX7a"/>
    <property type="match status" value="1"/>
</dbReference>
<dbReference type="PIRSF" id="PIRSF037710">
    <property type="entry name" value="COX7A-rel_mt"/>
    <property type="match status" value="1"/>
</dbReference>
<dbReference type="SUPFAM" id="SSF81419">
    <property type="entry name" value="Mitochondrial cytochrome c oxidase subunit VIIa"/>
    <property type="match status" value="1"/>
</dbReference>
<name>CO72L_HUMAN</name>
<organism>
    <name type="scientific">Homo sapiens</name>
    <name type="common">Human</name>
    <dbReference type="NCBI Taxonomy" id="9606"/>
    <lineage>
        <taxon>Eukaryota</taxon>
        <taxon>Metazoa</taxon>
        <taxon>Chordata</taxon>
        <taxon>Craniata</taxon>
        <taxon>Vertebrata</taxon>
        <taxon>Euteleostomi</taxon>
        <taxon>Mammalia</taxon>
        <taxon>Eutheria</taxon>
        <taxon>Euarchontoglires</taxon>
        <taxon>Primates</taxon>
        <taxon>Haplorrhini</taxon>
        <taxon>Catarrhini</taxon>
        <taxon>Hominidae</taxon>
        <taxon>Homo</taxon>
    </lineage>
</organism>
<proteinExistence type="evidence at protein level"/>
<keyword id="KW-0007">Acetylation</keyword>
<keyword id="KW-0472">Membrane</keyword>
<keyword id="KW-0496">Mitochondrion</keyword>
<keyword id="KW-0999">Mitochondrion inner membrane</keyword>
<keyword id="KW-1267">Proteomics identification</keyword>
<keyword id="KW-1185">Reference proteome</keyword>
<keyword id="KW-0809">Transit peptide</keyword>
<keyword id="KW-0812">Transmembrane</keyword>
<keyword id="KW-1133">Transmembrane helix</keyword>
<protein>
    <recommendedName>
        <fullName evidence="11">Cytochrome c oxidase subunit 7A2-like, mitochondrial</fullName>
    </recommendedName>
    <alternativeName>
        <fullName evidence="10">Cytochrome c oxidase subunit 7A-related protein</fullName>
        <shortName evidence="10">COX7a-related protein</shortName>
    </alternativeName>
    <alternativeName>
        <fullName evidence="10">Cytochrome c oxidase subunit VIIa-related protein</fullName>
    </alternativeName>
    <alternativeName>
        <fullName evidence="14">EB1</fullName>
    </alternativeName>
    <alternativeName>
        <fullName evidence="12">Supercomplex assembly factor 1</fullName>
    </alternativeName>
</protein>
<feature type="transit peptide" description="Mitochondrion" evidence="2">
    <location>
        <begin position="1"/>
        <end position="55"/>
    </location>
</feature>
<feature type="chain" id="PRO_0000006154" description="Cytochrome c oxidase subunit 7A2-like, mitochondrial">
    <location>
        <begin position="56"/>
        <end position="114"/>
    </location>
</feature>
<feature type="transmembrane region" description="Helical" evidence="1">
    <location>
        <begin position="82"/>
        <end position="107"/>
    </location>
</feature>
<feature type="modified residue" description="N6-acetyllysine" evidence="18">
    <location>
        <position position="69"/>
    </location>
</feature>
<feature type="mutagenesis site" description="Abolished ability to promote association between both mitochondrial respiratory complexes III (CIII) and IV (CIV)." evidence="4">
    <location>
        <begin position="74"/>
        <end position="75"/>
    </location>
</feature>
<feature type="sequence conflict" description="In Ref. 1; BAA22571." evidence="15" ref="1">
    <original>M</original>
    <variation>N</variation>
    <location>
        <position position="107"/>
    </location>
</feature>
<gene>
    <name evidence="11 17" type="primary">COX7A2L</name>
    <name evidence="10" type="synonym">COX7AR</name>
    <name type="synonym">COX7RP</name>
    <name evidence="12" type="synonym">SCAF1</name>
    <name evidence="13" type="synonym">SCAFI</name>
</gene>